<evidence type="ECO:0000255" key="1">
    <source>
        <dbReference type="HAMAP-Rule" id="MF_00643"/>
    </source>
</evidence>
<proteinExistence type="inferred from homology"/>
<comment type="function">
    <text evidence="1">This b-type cytochrome is tightly associated with the reaction center of photosystem II (PSII). PSII is a light-driven water:plastoquinone oxidoreductase that uses light energy to abstract electrons from H(2)O, generating O(2) and a proton gradient subsequently used for ATP formation. It consists of a core antenna complex that captures photons, and an electron transfer chain that converts photonic excitation into a charge separation.</text>
</comment>
<comment type="cofactor">
    <cofactor evidence="1">
        <name>heme b</name>
        <dbReference type="ChEBI" id="CHEBI:60344"/>
    </cofactor>
    <text evidence="1">With its partner (PsbE) binds heme. PSII binds additional chlorophylls, carotenoids and specific lipids.</text>
</comment>
<comment type="subunit">
    <text evidence="1">Heterodimer of an alpha subunit and a beta subunit. PSII is composed of 1 copy each of membrane proteins PsbA, PsbB, PsbC, PsbD, PsbE, PsbF, PsbH, PsbI, PsbJ, PsbK, PsbL, PsbM, PsbT, PsbX, PsbY, PsbZ, Psb30/Ycf12, at least 3 peripheral proteins of the oxygen-evolving complex and a large number of cofactors. It forms dimeric complexes.</text>
</comment>
<comment type="subcellular location">
    <subcellularLocation>
        <location evidence="1">Plastid</location>
        <location evidence="1">Chloroplast thylakoid membrane</location>
        <topology evidence="1">Single-pass membrane protein</topology>
    </subcellularLocation>
</comment>
<comment type="similarity">
    <text evidence="1">Belongs to the PsbE/PsbF family.</text>
</comment>
<geneLocation type="chloroplast"/>
<sequence length="39" mass="4424">MTIDRTYPIFTVRWLAVHGLAVPTVSFLGSISAMQFIQR</sequence>
<reference key="1">
    <citation type="journal article" date="1986" name="Curr. Genet.">
        <title>Cytochrome b-559 genes from Oenothera hookeri and Nicotiana tabacum show a remarkably high degree of conservation as compared to spinach. The enigma of cytochrome b-559: highly conserved genes and proteins but no known function.</title>
        <authorList>
            <person name="Carrillo N."/>
            <person name="Seyer P."/>
            <person name="Tyagi A."/>
            <person name="Herrmann R.G."/>
        </authorList>
    </citation>
    <scope>NUCLEOTIDE SEQUENCE [GENOMIC DNA]</scope>
</reference>
<reference key="2">
    <citation type="journal article" date="2000" name="Mol. Gen. Genet.">
        <title>Complete nucleotide sequence of the Oenothera elata plastid chromosome, representing plastome I of the five distinguishable Euoenothera plastomes.</title>
        <authorList>
            <person name="Hupfer H."/>
            <person name="Swiatek M."/>
            <person name="Hornung S."/>
            <person name="Herrmann R.G."/>
            <person name="Maier R.M."/>
            <person name="Chiu W.-L."/>
            <person name="Sears B."/>
        </authorList>
    </citation>
    <scope>NUCLEOTIDE SEQUENCE [LARGE SCALE GENOMIC DNA]</scope>
    <source>
        <strain>cv. Johansen</strain>
    </source>
</reference>
<accession>P62098</accession>
<accession>P05172</accession>
<dbReference type="EMBL" id="X03780">
    <property type="protein sequence ID" value="CAA27411.1"/>
    <property type="molecule type" value="Genomic_DNA"/>
</dbReference>
<dbReference type="EMBL" id="AJ271079">
    <property type="protein sequence ID" value="CAB67173.1"/>
    <property type="molecule type" value="Genomic_DNA"/>
</dbReference>
<dbReference type="PIR" id="S55790">
    <property type="entry name" value="S55790"/>
</dbReference>
<dbReference type="RefSeq" id="NP_084708.1">
    <property type="nucleotide sequence ID" value="NC_002693.2"/>
</dbReference>
<dbReference type="SMR" id="P62098"/>
<dbReference type="GeneID" id="802728"/>
<dbReference type="GO" id="GO:0009535">
    <property type="term" value="C:chloroplast thylakoid membrane"/>
    <property type="evidence" value="ECO:0007669"/>
    <property type="project" value="UniProtKB-SubCell"/>
</dbReference>
<dbReference type="GO" id="GO:0009539">
    <property type="term" value="C:photosystem II reaction center"/>
    <property type="evidence" value="ECO:0007669"/>
    <property type="project" value="InterPro"/>
</dbReference>
<dbReference type="GO" id="GO:0009055">
    <property type="term" value="F:electron transfer activity"/>
    <property type="evidence" value="ECO:0007669"/>
    <property type="project" value="UniProtKB-UniRule"/>
</dbReference>
<dbReference type="GO" id="GO:0020037">
    <property type="term" value="F:heme binding"/>
    <property type="evidence" value="ECO:0007669"/>
    <property type="project" value="InterPro"/>
</dbReference>
<dbReference type="GO" id="GO:0005506">
    <property type="term" value="F:iron ion binding"/>
    <property type="evidence" value="ECO:0007669"/>
    <property type="project" value="UniProtKB-UniRule"/>
</dbReference>
<dbReference type="GO" id="GO:0009767">
    <property type="term" value="P:photosynthetic electron transport chain"/>
    <property type="evidence" value="ECO:0007669"/>
    <property type="project" value="InterPro"/>
</dbReference>
<dbReference type="HAMAP" id="MF_00643">
    <property type="entry name" value="PSII_PsbF"/>
    <property type="match status" value="1"/>
</dbReference>
<dbReference type="InterPro" id="IPR006241">
    <property type="entry name" value="PSII_cyt_b559_bsu"/>
</dbReference>
<dbReference type="InterPro" id="IPR006216">
    <property type="entry name" value="PSII_cyt_b559_CS"/>
</dbReference>
<dbReference type="InterPro" id="IPR013081">
    <property type="entry name" value="PSII_cyt_b559_N"/>
</dbReference>
<dbReference type="NCBIfam" id="TIGR01333">
    <property type="entry name" value="cyt_b559_beta"/>
    <property type="match status" value="1"/>
</dbReference>
<dbReference type="Pfam" id="PF00283">
    <property type="entry name" value="Cytochrom_B559"/>
    <property type="match status" value="1"/>
</dbReference>
<dbReference type="PIRSF" id="PIRSF000037">
    <property type="entry name" value="PsbF"/>
    <property type="match status" value="1"/>
</dbReference>
<dbReference type="SUPFAM" id="SSF161045">
    <property type="entry name" value="Cytochrome b559 subunits"/>
    <property type="match status" value="1"/>
</dbReference>
<dbReference type="PROSITE" id="PS00537">
    <property type="entry name" value="CYTOCHROME_B559"/>
    <property type="match status" value="1"/>
</dbReference>
<gene>
    <name evidence="1" type="primary">psbF</name>
</gene>
<feature type="chain" id="PRO_0000200432" description="Cytochrome b559 subunit beta">
    <location>
        <begin position="1"/>
        <end position="39"/>
    </location>
</feature>
<feature type="transmembrane region" description="Helical" evidence="1">
    <location>
        <begin position="14"/>
        <end position="30"/>
    </location>
</feature>
<feature type="binding site" description="axial binding residue" evidence="1">
    <location>
        <position position="18"/>
    </location>
    <ligand>
        <name>heme</name>
        <dbReference type="ChEBI" id="CHEBI:30413"/>
        <note>ligand shared with alpha subunit</note>
    </ligand>
    <ligandPart>
        <name>Fe</name>
        <dbReference type="ChEBI" id="CHEBI:18248"/>
    </ligandPart>
</feature>
<keyword id="KW-0150">Chloroplast</keyword>
<keyword id="KW-0249">Electron transport</keyword>
<keyword id="KW-0349">Heme</keyword>
<keyword id="KW-0408">Iron</keyword>
<keyword id="KW-0472">Membrane</keyword>
<keyword id="KW-0479">Metal-binding</keyword>
<keyword id="KW-0602">Photosynthesis</keyword>
<keyword id="KW-0604">Photosystem II</keyword>
<keyword id="KW-0934">Plastid</keyword>
<keyword id="KW-0793">Thylakoid</keyword>
<keyword id="KW-0812">Transmembrane</keyword>
<keyword id="KW-1133">Transmembrane helix</keyword>
<keyword id="KW-0813">Transport</keyword>
<protein>
    <recommendedName>
        <fullName evidence="1">Cytochrome b559 subunit beta</fullName>
    </recommendedName>
    <alternativeName>
        <fullName evidence="1">PSII reaction center subunit VI</fullName>
    </alternativeName>
</protein>
<name>PSBF_OENEH</name>
<organism>
    <name type="scientific">Oenothera elata subsp. hookeri</name>
    <name type="common">Hooker's evening primrose</name>
    <name type="synonym">Oenothera hookeri</name>
    <dbReference type="NCBI Taxonomy" id="85636"/>
    <lineage>
        <taxon>Eukaryota</taxon>
        <taxon>Viridiplantae</taxon>
        <taxon>Streptophyta</taxon>
        <taxon>Embryophyta</taxon>
        <taxon>Tracheophyta</taxon>
        <taxon>Spermatophyta</taxon>
        <taxon>Magnoliopsida</taxon>
        <taxon>eudicotyledons</taxon>
        <taxon>Gunneridae</taxon>
        <taxon>Pentapetalae</taxon>
        <taxon>rosids</taxon>
        <taxon>malvids</taxon>
        <taxon>Myrtales</taxon>
        <taxon>Onagraceae</taxon>
        <taxon>Onagroideae</taxon>
        <taxon>Onagreae</taxon>
        <taxon>Oenothera</taxon>
    </lineage>
</organism>